<comment type="function">
    <text evidence="2">Serine protease inhibitor that inhibits trypsin at a molar ratio of 1:1.</text>
</comment>
<comment type="subcellular location">
    <subcellularLocation>
        <location evidence="6">Secreted</location>
    </subcellularLocation>
</comment>
<comment type="tissue specificity">
    <text evidence="6">Expressed by the venom gland.</text>
</comment>
<comment type="similarity">
    <text evidence="5">Belongs to the venom Kunitz-type family. 03 (sub-Kunitz) subfamily.</text>
</comment>
<keyword id="KW-1015">Disulfide bond</keyword>
<keyword id="KW-0646">Protease inhibitor</keyword>
<keyword id="KW-0964">Secreted</keyword>
<keyword id="KW-0722">Serine protease inhibitor</keyword>
<keyword id="KW-0732">Signal</keyword>
<reference key="1">
    <citation type="journal article" date="2010" name="J. Proteome Res.">
        <title>Molecular diversification of peptide toxins from the tarantula Haplopelma hainanum (Ornithoctonus hainana) venom based on transcriptomic, peptidomic, and genomic analyses.</title>
        <authorList>
            <person name="Tang X."/>
            <person name="Zhang Y."/>
            <person name="Hu W."/>
            <person name="Xu D."/>
            <person name="Tao H."/>
            <person name="Yang X."/>
            <person name="Li Y."/>
            <person name="Jiang L."/>
            <person name="Liang S."/>
        </authorList>
    </citation>
    <scope>NUCLEOTIDE SEQUENCE [LARGE SCALE GENOMIC DNA / MRNA]</scope>
    <source>
        <tissue>Venom gland</tissue>
    </source>
</reference>
<proteinExistence type="inferred from homology"/>
<feature type="signal peptide" evidence="3">
    <location>
        <begin position="1"/>
        <end position="27"/>
    </location>
</feature>
<feature type="propeptide" id="PRO_0000400998" evidence="1">
    <location>
        <begin position="28"/>
        <end position="33"/>
    </location>
</feature>
<feature type="peptide" id="PRO_0000400999" description="Kunitz-type U15-theraphotoxin-Hhn1k">
    <location>
        <begin position="34"/>
        <end position="88"/>
    </location>
</feature>
<feature type="domain" description="BPTI/Kunitz inhibitor" evidence="4">
    <location>
        <begin position="37"/>
        <end position="85"/>
    </location>
</feature>
<feature type="site" description="Reactive bond for chymotrypsin" evidence="1">
    <location>
        <begin position="47"/>
        <end position="48"/>
    </location>
</feature>
<feature type="disulfide bond" evidence="4">
    <location>
        <begin position="37"/>
        <end position="85"/>
    </location>
</feature>
<feature type="disulfide bond" evidence="4">
    <location>
        <begin position="60"/>
        <end position="81"/>
    </location>
</feature>
<accession>D2Y2G2</accession>
<evidence type="ECO:0000250" key="1"/>
<evidence type="ECO:0000250" key="2">
    <source>
        <dbReference type="UniProtKB" id="P68425"/>
    </source>
</evidence>
<evidence type="ECO:0000255" key="3"/>
<evidence type="ECO:0000255" key="4">
    <source>
        <dbReference type="PROSITE-ProRule" id="PRU00031"/>
    </source>
</evidence>
<evidence type="ECO:0000305" key="5"/>
<evidence type="ECO:0000305" key="6">
    <source>
    </source>
</evidence>
<name>VKTK1_CYRHA</name>
<sequence length="88" mass="9831">MGTARFLRAVLLLSVLLMVTFPALLSAEHHDGRVDICRLPSDSGDCLRFFEMWCFDGTTCTKFVYGGYGGNDNRFPTEKACMKRCAKA</sequence>
<protein>
    <recommendedName>
        <fullName>Kunitz-type U15-theraphotoxin-Hhn1k</fullName>
        <shortName>U15-TRTX-Hhn1k</shortName>
    </recommendedName>
    <alternativeName>
        <fullName>Kunitz-type serine protease inhibitor hainantoxin-XI-11</fullName>
        <shortName>HNTX-XI-11</shortName>
    </alternativeName>
</protein>
<dbReference type="EMBL" id="GU293039">
    <property type="protein sequence ID" value="ADB56855.1"/>
    <property type="molecule type" value="mRNA"/>
</dbReference>
<dbReference type="EMBL" id="GU293137">
    <property type="protein sequence ID" value="ADB56953.1"/>
    <property type="molecule type" value="Genomic_DNA"/>
</dbReference>
<dbReference type="SMR" id="D2Y2G2"/>
<dbReference type="ArachnoServer" id="AS001757">
    <property type="toxin name" value="U15-theraphotoxin-Hhn1k"/>
</dbReference>
<dbReference type="GO" id="GO:0005615">
    <property type="term" value="C:extracellular space"/>
    <property type="evidence" value="ECO:0007669"/>
    <property type="project" value="TreeGrafter"/>
</dbReference>
<dbReference type="GO" id="GO:0015459">
    <property type="term" value="F:potassium channel regulator activity"/>
    <property type="evidence" value="ECO:0007669"/>
    <property type="project" value="UniProtKB-KW"/>
</dbReference>
<dbReference type="GO" id="GO:0004867">
    <property type="term" value="F:serine-type endopeptidase inhibitor activity"/>
    <property type="evidence" value="ECO:0007669"/>
    <property type="project" value="UniProtKB-KW"/>
</dbReference>
<dbReference type="GO" id="GO:0090729">
    <property type="term" value="F:toxin activity"/>
    <property type="evidence" value="ECO:0007669"/>
    <property type="project" value="UniProtKB-KW"/>
</dbReference>
<dbReference type="GO" id="GO:0044562">
    <property type="term" value="P:envenomation resulting in negative regulation of voltage-gated potassium channel activity in another organism"/>
    <property type="evidence" value="ECO:0007669"/>
    <property type="project" value="UniProtKB-ARBA"/>
</dbReference>
<dbReference type="CDD" id="cd22598">
    <property type="entry name" value="Kunitz_huwentoxin"/>
    <property type="match status" value="1"/>
</dbReference>
<dbReference type="FunFam" id="4.10.410.10:FF:000020">
    <property type="entry name" value="Collagen, type VI, alpha 3"/>
    <property type="match status" value="1"/>
</dbReference>
<dbReference type="Gene3D" id="4.10.410.10">
    <property type="entry name" value="Pancreatic trypsin inhibitor Kunitz domain"/>
    <property type="match status" value="1"/>
</dbReference>
<dbReference type="InterPro" id="IPR002223">
    <property type="entry name" value="Kunitz_BPTI"/>
</dbReference>
<dbReference type="InterPro" id="IPR036880">
    <property type="entry name" value="Kunitz_BPTI_sf"/>
</dbReference>
<dbReference type="InterPro" id="IPR050098">
    <property type="entry name" value="TFPI/VKTCI-like"/>
</dbReference>
<dbReference type="PANTHER" id="PTHR10083">
    <property type="entry name" value="KUNITZ-TYPE PROTEASE INHIBITOR-RELATED"/>
    <property type="match status" value="1"/>
</dbReference>
<dbReference type="PANTHER" id="PTHR10083:SF328">
    <property type="entry name" value="TISSUE FACTOR PATHWAY INHIBITOR"/>
    <property type="match status" value="1"/>
</dbReference>
<dbReference type="Pfam" id="PF00014">
    <property type="entry name" value="Kunitz_BPTI"/>
    <property type="match status" value="1"/>
</dbReference>
<dbReference type="PRINTS" id="PR00759">
    <property type="entry name" value="BASICPTASE"/>
</dbReference>
<dbReference type="SMART" id="SM00131">
    <property type="entry name" value="KU"/>
    <property type="match status" value="1"/>
</dbReference>
<dbReference type="SUPFAM" id="SSF57362">
    <property type="entry name" value="BPTI-like"/>
    <property type="match status" value="1"/>
</dbReference>
<dbReference type="PROSITE" id="PS50279">
    <property type="entry name" value="BPTI_KUNITZ_2"/>
    <property type="match status" value="1"/>
</dbReference>
<organism>
    <name type="scientific">Cyriopagopus hainanus</name>
    <name type="common">Chinese bird spider</name>
    <name type="synonym">Haplopelma hainanum</name>
    <dbReference type="NCBI Taxonomy" id="209901"/>
    <lineage>
        <taxon>Eukaryota</taxon>
        <taxon>Metazoa</taxon>
        <taxon>Ecdysozoa</taxon>
        <taxon>Arthropoda</taxon>
        <taxon>Chelicerata</taxon>
        <taxon>Arachnida</taxon>
        <taxon>Araneae</taxon>
        <taxon>Mygalomorphae</taxon>
        <taxon>Theraphosidae</taxon>
        <taxon>Haplopelma</taxon>
    </lineage>
</organism>